<name>RL3_SPIKU</name>
<reference key="1">
    <citation type="journal article" date="2003" name="Mol. Genet. Genomics">
        <title>Gene content and organization of an 85-kb DNA segment from the genome of the phytopathogenic mollicute Spiroplasma kunkelii.</title>
        <authorList>
            <person name="Zhao Y."/>
            <person name="Hammond R.W."/>
            <person name="Jomantiene R."/>
            <person name="Dally E.L."/>
            <person name="Lee I.-M."/>
            <person name="Jia H."/>
            <person name="Wu H."/>
            <person name="Lin S."/>
            <person name="Zhang P."/>
            <person name="Kenton S."/>
            <person name="Najar F.Z."/>
            <person name="Hua A."/>
            <person name="Roe B.A."/>
            <person name="Fletcher J."/>
            <person name="Davis R.E."/>
        </authorList>
    </citation>
    <scope>NUCLEOTIDE SEQUENCE [GENOMIC DNA]</scope>
    <source>
        <strain>CR2-3x</strain>
    </source>
</reference>
<sequence length="258" mass="27940">MKGILGRKIGMTQIFATDGRLIPVTVVEVEHNIVLRVLTKEQNGYQALQLAVEDKRISLVSKPDQGQFKKANTTPKRFVKEIRNMDGYNSGDIIKADIFTAGEFVDVTGTSKGKGFTGSIKRHNYSRGPMGHGSGYHRGVGSMGAIAPNRILKSKKMPGHIGTEKVTIQNLEIIAIDTEKNALLVKGSIPGPKKQFVVIKEAIKGLKPNTPTELLKRTVETKTPDPTVKEEKPVEGVVDAAVDTTLTAVTDAPASKTE</sequence>
<comment type="function">
    <text evidence="1">One of the primary rRNA binding proteins, it binds directly near the 3'-end of the 23S rRNA, where it nucleates assembly of the 50S subunit.</text>
</comment>
<comment type="subunit">
    <text evidence="1">Part of the 50S ribosomal subunit. Forms a cluster with proteins L14 and L19.</text>
</comment>
<comment type="similarity">
    <text evidence="1">Belongs to the universal ribosomal protein uL3 family.</text>
</comment>
<organism>
    <name type="scientific">Spiroplasma kunkelii</name>
    <dbReference type="NCBI Taxonomy" id="47834"/>
    <lineage>
        <taxon>Bacteria</taxon>
        <taxon>Bacillati</taxon>
        <taxon>Mycoplasmatota</taxon>
        <taxon>Mollicutes</taxon>
        <taxon>Entomoplasmatales</taxon>
        <taxon>Spiroplasmataceae</taxon>
        <taxon>Spiroplasma</taxon>
    </lineage>
</organism>
<keyword id="KW-0687">Ribonucleoprotein</keyword>
<keyword id="KW-0689">Ribosomal protein</keyword>
<keyword id="KW-0694">RNA-binding</keyword>
<keyword id="KW-0699">rRNA-binding</keyword>
<gene>
    <name evidence="1" type="primary">rplC</name>
</gene>
<accession>P60457</accession>
<evidence type="ECO:0000255" key="1">
    <source>
        <dbReference type="HAMAP-Rule" id="MF_01325"/>
    </source>
</evidence>
<evidence type="ECO:0000305" key="2"/>
<feature type="chain" id="PRO_0000077152" description="Large ribosomal subunit protein uL3">
    <location>
        <begin position="1"/>
        <end position="258"/>
    </location>
</feature>
<dbReference type="EMBL" id="AY198133">
    <property type="protein sequence ID" value="AAP58892.1"/>
    <property type="molecule type" value="Genomic_DNA"/>
</dbReference>
<dbReference type="SMR" id="P60457"/>
<dbReference type="GO" id="GO:0022625">
    <property type="term" value="C:cytosolic large ribosomal subunit"/>
    <property type="evidence" value="ECO:0007669"/>
    <property type="project" value="TreeGrafter"/>
</dbReference>
<dbReference type="GO" id="GO:0019843">
    <property type="term" value="F:rRNA binding"/>
    <property type="evidence" value="ECO:0007669"/>
    <property type="project" value="UniProtKB-UniRule"/>
</dbReference>
<dbReference type="GO" id="GO:0003735">
    <property type="term" value="F:structural constituent of ribosome"/>
    <property type="evidence" value="ECO:0007669"/>
    <property type="project" value="InterPro"/>
</dbReference>
<dbReference type="GO" id="GO:0006412">
    <property type="term" value="P:translation"/>
    <property type="evidence" value="ECO:0007669"/>
    <property type="project" value="UniProtKB-UniRule"/>
</dbReference>
<dbReference type="FunFam" id="2.40.30.10:FF:000004">
    <property type="entry name" value="50S ribosomal protein L3"/>
    <property type="match status" value="1"/>
</dbReference>
<dbReference type="Gene3D" id="3.30.160.810">
    <property type="match status" value="1"/>
</dbReference>
<dbReference type="Gene3D" id="2.40.30.10">
    <property type="entry name" value="Translation factors"/>
    <property type="match status" value="1"/>
</dbReference>
<dbReference type="HAMAP" id="MF_01325_B">
    <property type="entry name" value="Ribosomal_uL3_B"/>
    <property type="match status" value="1"/>
</dbReference>
<dbReference type="InterPro" id="IPR000597">
    <property type="entry name" value="Ribosomal_uL3"/>
</dbReference>
<dbReference type="InterPro" id="IPR019927">
    <property type="entry name" value="Ribosomal_uL3_bac/org-type"/>
</dbReference>
<dbReference type="InterPro" id="IPR019926">
    <property type="entry name" value="Ribosomal_uL3_CS"/>
</dbReference>
<dbReference type="InterPro" id="IPR009000">
    <property type="entry name" value="Transl_B-barrel_sf"/>
</dbReference>
<dbReference type="NCBIfam" id="TIGR03625">
    <property type="entry name" value="L3_bact"/>
    <property type="match status" value="1"/>
</dbReference>
<dbReference type="PANTHER" id="PTHR11229">
    <property type="entry name" value="50S RIBOSOMAL PROTEIN L3"/>
    <property type="match status" value="1"/>
</dbReference>
<dbReference type="PANTHER" id="PTHR11229:SF16">
    <property type="entry name" value="LARGE RIBOSOMAL SUBUNIT PROTEIN UL3C"/>
    <property type="match status" value="1"/>
</dbReference>
<dbReference type="Pfam" id="PF00297">
    <property type="entry name" value="Ribosomal_L3"/>
    <property type="match status" value="1"/>
</dbReference>
<dbReference type="SUPFAM" id="SSF50447">
    <property type="entry name" value="Translation proteins"/>
    <property type="match status" value="1"/>
</dbReference>
<dbReference type="PROSITE" id="PS00474">
    <property type="entry name" value="RIBOSOMAL_L3"/>
    <property type="match status" value="1"/>
</dbReference>
<protein>
    <recommendedName>
        <fullName evidence="1">Large ribosomal subunit protein uL3</fullName>
    </recommendedName>
    <alternativeName>
        <fullName evidence="2">50S ribosomal protein L3</fullName>
    </alternativeName>
</protein>
<proteinExistence type="inferred from homology"/>